<comment type="function">
    <text evidence="4 5">Magnesium-independent phospholipid phosphatase with broad substrate specificity (PubMed:17590538). Preferentially catalyzes the conversion of diacylglycerol pyrophosphate into phosphatidate but can also act on phosphatidate and lysophosphatidate (PubMed:17590538). Phospholipid phosphatases are involved in both the synthesis of lipids and the degradation or generation of lipid-signaling molecules like diacylglycerol (PubMed:28851360).</text>
</comment>
<comment type="catalytic activity">
    <reaction evidence="4">
        <text>a 1,2-diacyl-sn-glycerol 3-diphosphate + H2O = a 1,2-diacyl-sn-glycero-3-phosphate + phosphate + H(+)</text>
        <dbReference type="Rhea" id="RHEA:27449"/>
        <dbReference type="ChEBI" id="CHEBI:15377"/>
        <dbReference type="ChEBI" id="CHEBI:15378"/>
        <dbReference type="ChEBI" id="CHEBI:43474"/>
        <dbReference type="ChEBI" id="CHEBI:58608"/>
        <dbReference type="ChEBI" id="CHEBI:59996"/>
        <dbReference type="EC" id="3.6.1.75"/>
    </reaction>
    <physiologicalReaction direction="left-to-right" evidence="9">
        <dbReference type="Rhea" id="RHEA:27450"/>
    </physiologicalReaction>
</comment>
<comment type="catalytic activity">
    <reaction evidence="4">
        <text>a 1,2-diacyl-sn-glycero-3-phosphate + H2O = a 1,2-diacyl-sn-glycerol + phosphate</text>
        <dbReference type="Rhea" id="RHEA:27429"/>
        <dbReference type="ChEBI" id="CHEBI:15377"/>
        <dbReference type="ChEBI" id="CHEBI:17815"/>
        <dbReference type="ChEBI" id="CHEBI:43474"/>
        <dbReference type="ChEBI" id="CHEBI:58608"/>
        <dbReference type="EC" id="3.1.3.4"/>
    </reaction>
    <physiologicalReaction direction="left-to-right" evidence="9">
        <dbReference type="Rhea" id="RHEA:27430"/>
    </physiologicalReaction>
</comment>
<comment type="catalytic activity">
    <reaction evidence="4">
        <text>1,2-dioctanoyl-sn-glycero-3-diphosphate + H2O = 1,2-dioctanoyl-sn-glycero-3-phosphate + phosphate + H(+)</text>
        <dbReference type="Rhea" id="RHEA:42856"/>
        <dbReference type="ChEBI" id="CHEBI:15377"/>
        <dbReference type="ChEBI" id="CHEBI:15378"/>
        <dbReference type="ChEBI" id="CHEBI:43474"/>
        <dbReference type="ChEBI" id="CHEBI:78229"/>
        <dbReference type="ChEBI" id="CHEBI:82765"/>
    </reaction>
    <physiologicalReaction direction="left-to-right" evidence="9">
        <dbReference type="Rhea" id="RHEA:42857"/>
    </physiologicalReaction>
</comment>
<comment type="catalytic activity">
    <reaction evidence="4">
        <text>1,2-dioctanoyl-sn-glycero-3-phosphate + H2O = 1,2-dioctanoyl-sn-glycerol + phosphate</text>
        <dbReference type="Rhea" id="RHEA:42860"/>
        <dbReference type="ChEBI" id="CHEBI:15377"/>
        <dbReference type="ChEBI" id="CHEBI:43474"/>
        <dbReference type="ChEBI" id="CHEBI:76979"/>
        <dbReference type="ChEBI" id="CHEBI:78229"/>
    </reaction>
    <physiologicalReaction direction="left-to-right" evidence="9">
        <dbReference type="Rhea" id="RHEA:42861"/>
    </physiologicalReaction>
</comment>
<comment type="catalytic activity">
    <reaction evidence="4">
        <text>1-(9Z-octadecenoyl)-sn-glycero-3-phosphate + H2O = 1-(9Z-octadecenoyl)-sn-glycerol + phosphate</text>
        <dbReference type="Rhea" id="RHEA:39835"/>
        <dbReference type="ChEBI" id="CHEBI:15377"/>
        <dbReference type="ChEBI" id="CHEBI:43474"/>
        <dbReference type="ChEBI" id="CHEBI:74544"/>
        <dbReference type="ChEBI" id="CHEBI:75757"/>
    </reaction>
    <physiologicalReaction direction="left-to-right" evidence="9">
        <dbReference type="Rhea" id="RHEA:39836"/>
    </physiologicalReaction>
</comment>
<comment type="activity regulation">
    <text evidence="4">Magnesium-independent phospholipid phosphatase (PubMed:17590538). Inhibited by N-ethylmaleimide (PubMed:17590538).</text>
</comment>
<comment type="biophysicochemical properties">
    <kinetics>
        <KM evidence="4">104 uM for 1,2-dioctanoyl-sn-glycero-3-diphosphate/diacylglycerol pyrophosphate</KM>
        <KM evidence="4">506 uM for 1,2-dioctanoyl-sn-glycero-3-phosphate/phosphatidate</KM>
        <KM evidence="4">580 uM for 1-(9Z-octadecenoyl)-sn-glycero-3-phosphate/lysophosphatidate</KM>
    </kinetics>
</comment>
<comment type="pathway">
    <text evidence="4">Lipid metabolism; phospholipid metabolism.</text>
</comment>
<comment type="interaction">
    <interactant intactId="EBI-10485931">
        <id>Q5VZY2</id>
    </interactant>
    <interactant intactId="EBI-12109402">
        <id>Q86W74-2</id>
        <label>ANKRD46</label>
    </interactant>
    <organismsDiffer>false</organismsDiffer>
    <experiments>3</experiments>
</comment>
<comment type="interaction">
    <interactant intactId="EBI-10485931">
        <id>Q5VZY2</id>
    </interactant>
    <interactant intactId="EBI-11343438">
        <id>Q3SXY8</id>
        <label>ARL13B</label>
    </interactant>
    <organismsDiffer>false</organismsDiffer>
    <experiments>3</experiments>
</comment>
<comment type="interaction">
    <interactant intactId="EBI-10485931">
        <id>Q5VZY2</id>
    </interactant>
    <interactant intactId="EBI-747430">
        <id>Q9BXK5</id>
        <label>BCL2L13</label>
    </interactant>
    <organismsDiffer>false</organismsDiffer>
    <experiments>3</experiments>
</comment>
<comment type="interaction">
    <interactant intactId="EBI-10485931">
        <id>Q5VZY2</id>
    </interactant>
    <interactant intactId="EBI-700794">
        <id>Q13323</id>
        <label>BIK</label>
    </interactant>
    <organismsDiffer>false</organismsDiffer>
    <experiments>3</experiments>
</comment>
<comment type="interaction">
    <interactant intactId="EBI-10485931">
        <id>Q5VZY2</id>
    </interactant>
    <interactant intactId="EBI-3922513">
        <id>O95393</id>
        <label>BMP10</label>
    </interactant>
    <organismsDiffer>false</organismsDiffer>
    <experiments>3</experiments>
</comment>
<comment type="interaction">
    <interactant intactId="EBI-10485931">
        <id>Q5VZY2</id>
    </interactant>
    <interactant intactId="EBI-12222807">
        <id>P04233-2</id>
        <label>CD74</label>
    </interactant>
    <organismsDiffer>false</organismsDiffer>
    <experiments>3</experiments>
</comment>
<comment type="interaction">
    <interactant intactId="EBI-10485931">
        <id>Q5VZY2</id>
    </interactant>
    <interactant intactId="EBI-1045797">
        <id>Q8N5K1</id>
        <label>CISD2</label>
    </interactant>
    <organismsDiffer>false</organismsDiffer>
    <experiments>3</experiments>
</comment>
<comment type="interaction">
    <interactant intactId="EBI-10485931">
        <id>Q5VZY2</id>
    </interactant>
    <interactant intactId="EBI-18013275">
        <id>Q7Z7G2</id>
        <label>CPLX4</label>
    </interactant>
    <organismsDiffer>false</organismsDiffer>
    <experiments>3</experiments>
</comment>
<comment type="interaction">
    <interactant intactId="EBI-10485931">
        <id>Q5VZY2</id>
    </interactant>
    <interactant intactId="EBI-6942903">
        <id>Q96BA8</id>
        <label>CREB3L1</label>
    </interactant>
    <organismsDiffer>false</organismsDiffer>
    <experiments>3</experiments>
</comment>
<comment type="interaction">
    <interactant intactId="EBI-10485931">
        <id>Q5VZY2</id>
    </interactant>
    <interactant intactId="EBI-1058710">
        <id>O43169</id>
        <label>CYB5B</label>
    </interactant>
    <organismsDiffer>false</organismsDiffer>
    <experiments>3</experiments>
</comment>
<comment type="interaction">
    <interactant intactId="EBI-10485931">
        <id>Q5VZY2</id>
    </interactant>
    <interactant intactId="EBI-781551">
        <id>Q9Y282</id>
        <label>ERGIC3</label>
    </interactant>
    <organismsDiffer>false</organismsDiffer>
    <experiments>3</experiments>
</comment>
<comment type="interaction">
    <interactant intactId="EBI-10485931">
        <id>Q5VZY2</id>
    </interactant>
    <interactant intactId="EBI-2870359">
        <id>P22794</id>
        <label>EVI2A</label>
    </interactant>
    <organismsDiffer>false</organismsDiffer>
    <experiments>3</experiments>
</comment>
<comment type="interaction">
    <interactant intactId="EBI-10485931">
        <id>Q5VZY2</id>
    </interactant>
    <interactant intactId="EBI-18304435">
        <id>Q5JX71</id>
        <label>FAM209A</label>
    </interactant>
    <organismsDiffer>false</organismsDiffer>
    <experiments>3</experiments>
</comment>
<comment type="interaction">
    <interactant intactId="EBI-10485931">
        <id>Q5VZY2</id>
    </interactant>
    <interactant intactId="EBI-6911547">
        <id>A2A2Y4</id>
        <label>FRMD3</label>
    </interactant>
    <organismsDiffer>false</organismsDiffer>
    <experiments>3</experiments>
</comment>
<comment type="interaction">
    <interactant intactId="EBI-10485931">
        <id>Q5VZY2</id>
    </interactant>
    <interactant intactId="EBI-18908258">
        <id>O00258</id>
        <label>GET1</label>
    </interactant>
    <organismsDiffer>false</organismsDiffer>
    <experiments>3</experiments>
</comment>
<comment type="interaction">
    <interactant intactId="EBI-10485931">
        <id>Q5VZY2</id>
    </interactant>
    <interactant intactId="EBI-1103439">
        <id>P17302</id>
        <label>GJA1</label>
    </interactant>
    <organismsDiffer>false</organismsDiffer>
    <experiments>3</experiments>
</comment>
<comment type="interaction">
    <interactant intactId="EBI-10485931">
        <id>Q5VZY2</id>
    </interactant>
    <interactant intactId="EBI-3909454">
        <id>O95377</id>
        <label>GJB5</label>
    </interactant>
    <organismsDiffer>false</organismsDiffer>
    <experiments>3</experiments>
</comment>
<comment type="interaction">
    <interactant intactId="EBI-10485931">
        <id>Q5VZY2</id>
    </interactant>
    <interactant intactId="EBI-11721746">
        <id>Q8TED1</id>
        <label>GPX8</label>
    </interactant>
    <organismsDiffer>false</organismsDiffer>
    <experiments>3</experiments>
</comment>
<comment type="interaction">
    <interactant intactId="EBI-10485931">
        <id>Q5VZY2</id>
    </interactant>
    <interactant intactId="EBI-358888">
        <id>Q96AG4</id>
        <label>LRRC59</label>
    </interactant>
    <organismsDiffer>false</organismsDiffer>
    <experiments>3</experiments>
</comment>
<comment type="interaction">
    <interactant intactId="EBI-10485931">
        <id>Q5VZY2</id>
    </interactant>
    <interactant intactId="EBI-724754">
        <id>O14880</id>
        <label>MGST3</label>
    </interactant>
    <organismsDiffer>false</organismsDiffer>
    <experiments>3</experiments>
</comment>
<comment type="interaction">
    <interactant intactId="EBI-10485931">
        <id>Q5VZY2</id>
    </interactant>
    <interactant intactId="EBI-2559100">
        <id>O75459</id>
        <label>PAGE1</label>
    </interactant>
    <organismsDiffer>false</organismsDiffer>
    <experiments>3</experiments>
</comment>
<comment type="interaction">
    <interactant intactId="EBI-10485931">
        <id>Q5VZY2</id>
    </interactant>
    <interactant intactId="EBI-716063">
        <id>Q13113</id>
        <label>PDZK1IP1</label>
    </interactant>
    <organismsDiffer>false</organismsDiffer>
    <experiments>3</experiments>
</comment>
<comment type="interaction">
    <interactant intactId="EBI-10485931">
        <id>Q5VZY2</id>
    </interactant>
    <interactant intactId="EBI-10485931">
        <id>Q5VZY2</id>
        <label>PLPP4</label>
    </interactant>
    <organismsDiffer>false</organismsDiffer>
    <experiments>6</experiments>
</comment>
<comment type="interaction">
    <interactant intactId="EBI-10485931">
        <id>Q5VZY2</id>
    </interactant>
    <interactant intactId="EBI-3920694">
        <id>Q9NR31</id>
        <label>SAR1A</label>
    </interactant>
    <organismsDiffer>false</organismsDiffer>
    <experiments>3</experiments>
</comment>
<comment type="interaction">
    <interactant intactId="EBI-10485931">
        <id>Q5VZY2</id>
    </interactant>
    <interactant intactId="EBI-1046170">
        <id>O95470</id>
        <label>SGPL1</label>
    </interactant>
    <organismsDiffer>false</organismsDiffer>
    <experiments>3</experiments>
</comment>
<comment type="interaction">
    <interactant intactId="EBI-10485931">
        <id>Q5VZY2</id>
    </interactant>
    <interactant intactId="EBI-12870360">
        <id>P78382</id>
        <label>SLC35A1</label>
    </interactant>
    <organismsDiffer>false</organismsDiffer>
    <experiments>3</experiments>
</comment>
<comment type="interaction">
    <interactant intactId="EBI-10485931">
        <id>Q5VZY2</id>
    </interactant>
    <interactant intactId="EBI-17280858">
        <id>Q8WWF3</id>
        <label>SSMEM1</label>
    </interactant>
    <organismsDiffer>false</organismsDiffer>
    <experiments>3</experiments>
</comment>
<comment type="interaction">
    <interactant intactId="EBI-10485931">
        <id>Q5VZY2</id>
    </interactant>
    <interactant intactId="EBI-712466">
        <id>Q16623</id>
        <label>STX1A</label>
    </interactant>
    <organismsDiffer>false</organismsDiffer>
    <experiments>3</experiments>
</comment>
<comment type="interaction">
    <interactant intactId="EBI-10485931">
        <id>Q5VZY2</id>
    </interactant>
    <interactant intactId="EBI-11956649">
        <id>P32856-2</id>
        <label>STX2</label>
    </interactant>
    <organismsDiffer>false</organismsDiffer>
    <experiments>3</experiments>
</comment>
<comment type="interaction">
    <interactant intactId="EBI-10485931">
        <id>Q5VZY2</id>
    </interactant>
    <interactant intactId="EBI-8032987">
        <id>Q8N9I0</id>
        <label>SYT2</label>
    </interactant>
    <organismsDiffer>false</organismsDiffer>
    <experiments>3</experiments>
</comment>
<comment type="interaction">
    <interactant intactId="EBI-10485931">
        <id>Q5VZY2</id>
    </interactant>
    <interactant intactId="EBI-7238458">
        <id>Q8IV31</id>
        <label>TMEM139</label>
    </interactant>
    <organismsDiffer>false</organismsDiffer>
    <experiments>3</experiments>
</comment>
<comment type="interaction">
    <interactant intactId="EBI-10485931">
        <id>Q5VZY2</id>
    </interactant>
    <interactant intactId="EBI-3923061">
        <id>Q96B21</id>
        <label>TMEM45B</label>
    </interactant>
    <organismsDiffer>false</organismsDiffer>
    <experiments>3</experiments>
</comment>
<comment type="interaction">
    <interactant intactId="EBI-10485931">
        <id>Q5VZY2</id>
    </interactant>
    <interactant intactId="EBI-12237619">
        <id>O75841</id>
        <label>UPK1B</label>
    </interactant>
    <organismsDiffer>false</organismsDiffer>
    <experiments>3</experiments>
</comment>
<comment type="subcellular location">
    <subcellularLocation>
        <location evidence="9">Membrane</location>
        <topology evidence="2">Multi-pass membrane protein</topology>
    </subcellularLocation>
</comment>
<comment type="alternative products">
    <event type="alternative splicing"/>
    <isoform>
        <id>Q5VZY2-1</id>
        <name>1</name>
        <sequence type="displayed"/>
    </isoform>
    <isoform>
        <id>Q5VZY2-2</id>
        <name>2</name>
        <sequence type="described" ref="VSP_025238"/>
    </isoform>
    <isoform>
        <id>Q5VZY2-3</id>
        <name>3</name>
        <sequence type="described" ref="VSP_025237"/>
    </isoform>
    <isoform>
        <id>Q5VZY2-4</id>
        <name>4</name>
        <sequence type="described" ref="VSP_025239 VSP_025240"/>
    </isoform>
</comment>
<comment type="tissue specificity">
    <text evidence="4">Expressed mainly to the brain, kidney and testis, and to a lesser extent the bone marrow, thymus, prostate, liver and uterus.</text>
</comment>
<comment type="similarity">
    <text evidence="8">Belongs to the PA-phosphatase related phosphoesterase family.</text>
</comment>
<organism>
    <name type="scientific">Homo sapiens</name>
    <name type="common">Human</name>
    <dbReference type="NCBI Taxonomy" id="9606"/>
    <lineage>
        <taxon>Eukaryota</taxon>
        <taxon>Metazoa</taxon>
        <taxon>Chordata</taxon>
        <taxon>Craniata</taxon>
        <taxon>Vertebrata</taxon>
        <taxon>Euteleostomi</taxon>
        <taxon>Mammalia</taxon>
        <taxon>Eutheria</taxon>
        <taxon>Euarchontoglires</taxon>
        <taxon>Primates</taxon>
        <taxon>Haplorrhini</taxon>
        <taxon>Catarrhini</taxon>
        <taxon>Hominidae</taxon>
        <taxon>Homo</taxon>
    </lineage>
</organism>
<proteinExistence type="evidence at protein level"/>
<evidence type="ECO:0000250" key="1">
    <source>
        <dbReference type="UniProtKB" id="O34349"/>
    </source>
</evidence>
<evidence type="ECO:0000255" key="2"/>
<evidence type="ECO:0000256" key="3">
    <source>
        <dbReference type="SAM" id="MobiDB-lite"/>
    </source>
</evidence>
<evidence type="ECO:0000269" key="4">
    <source>
    </source>
</evidence>
<evidence type="ECO:0000269" key="5">
    <source>
    </source>
</evidence>
<evidence type="ECO:0000303" key="6">
    <source>
    </source>
</evidence>
<evidence type="ECO:0000303" key="7">
    <source>
    </source>
</evidence>
<evidence type="ECO:0000305" key="8"/>
<evidence type="ECO:0000305" key="9">
    <source>
    </source>
</evidence>
<evidence type="ECO:0000312" key="10">
    <source>
        <dbReference type="HGNC" id="HGNC:23531"/>
    </source>
</evidence>
<keyword id="KW-0025">Alternative splicing</keyword>
<keyword id="KW-0378">Hydrolase</keyword>
<keyword id="KW-0443">Lipid metabolism</keyword>
<keyword id="KW-0472">Membrane</keyword>
<keyword id="KW-1267">Proteomics identification</keyword>
<keyword id="KW-1185">Reference proteome</keyword>
<keyword id="KW-0812">Transmembrane</keyword>
<keyword id="KW-1133">Transmembrane helix</keyword>
<reference key="1">
    <citation type="journal article" date="2007" name="Gene">
        <title>Cloning and characterization of DPPL1 and DPPL2, representatives of a novel type of mammalian phosphatidate phosphatase.</title>
        <authorList>
            <person name="Takeuchi M."/>
            <person name="Harigai M."/>
            <person name="Momohara S."/>
            <person name="Ball E."/>
            <person name="Abe J."/>
            <person name="Furuichi K."/>
            <person name="Kamatani N."/>
        </authorList>
    </citation>
    <scope>NUCLEOTIDE SEQUENCE [GENOMIC DNA]</scope>
    <scope>FUNCTION</scope>
    <scope>CATALYTIC ACTIVITY</scope>
    <scope>BIOPHYSICOCHEMICAL PROPERTIES</scope>
    <scope>SUBSTRATE SPECIFICITY</scope>
    <scope>ACTIVITY REGULATION</scope>
    <scope>PATHWAY</scope>
    <scope>SUBCELLULAR LOCATION</scope>
    <scope>TISSUE SPECIFICITY</scope>
    <scope>REGION</scope>
    <scope>MUTAGENESIS OF ARG-109; HIS-146 AND HIS-202</scope>
</reference>
<reference key="2">
    <citation type="journal article" date="2004" name="Nature">
        <title>The DNA sequence and comparative analysis of human chromosome 10.</title>
        <authorList>
            <person name="Deloukas P."/>
            <person name="Earthrowl M.E."/>
            <person name="Grafham D.V."/>
            <person name="Rubenfield M."/>
            <person name="French L."/>
            <person name="Steward C.A."/>
            <person name="Sims S.K."/>
            <person name="Jones M.C."/>
            <person name="Searle S."/>
            <person name="Scott C."/>
            <person name="Howe K."/>
            <person name="Hunt S.E."/>
            <person name="Andrews T.D."/>
            <person name="Gilbert J.G.R."/>
            <person name="Swarbreck D."/>
            <person name="Ashurst J.L."/>
            <person name="Taylor A."/>
            <person name="Battles J."/>
            <person name="Bird C.P."/>
            <person name="Ainscough R."/>
            <person name="Almeida J.P."/>
            <person name="Ashwell R.I.S."/>
            <person name="Ambrose K.D."/>
            <person name="Babbage A.K."/>
            <person name="Bagguley C.L."/>
            <person name="Bailey J."/>
            <person name="Banerjee R."/>
            <person name="Bates K."/>
            <person name="Beasley H."/>
            <person name="Bray-Allen S."/>
            <person name="Brown A.J."/>
            <person name="Brown J.Y."/>
            <person name="Burford D.C."/>
            <person name="Burrill W."/>
            <person name="Burton J."/>
            <person name="Cahill P."/>
            <person name="Camire D."/>
            <person name="Carter N.P."/>
            <person name="Chapman J.C."/>
            <person name="Clark S.Y."/>
            <person name="Clarke G."/>
            <person name="Clee C.M."/>
            <person name="Clegg S."/>
            <person name="Corby N."/>
            <person name="Coulson A."/>
            <person name="Dhami P."/>
            <person name="Dutta I."/>
            <person name="Dunn M."/>
            <person name="Faulkner L."/>
            <person name="Frankish A."/>
            <person name="Frankland J.A."/>
            <person name="Garner P."/>
            <person name="Garnett J."/>
            <person name="Gribble S."/>
            <person name="Griffiths C."/>
            <person name="Grocock R."/>
            <person name="Gustafson E."/>
            <person name="Hammond S."/>
            <person name="Harley J.L."/>
            <person name="Hart E."/>
            <person name="Heath P.D."/>
            <person name="Ho T.P."/>
            <person name="Hopkins B."/>
            <person name="Horne J."/>
            <person name="Howden P.J."/>
            <person name="Huckle E."/>
            <person name="Hynds C."/>
            <person name="Johnson C."/>
            <person name="Johnson D."/>
            <person name="Kana A."/>
            <person name="Kay M."/>
            <person name="Kimberley A.M."/>
            <person name="Kershaw J.K."/>
            <person name="Kokkinaki M."/>
            <person name="Laird G.K."/>
            <person name="Lawlor S."/>
            <person name="Lee H.M."/>
            <person name="Leongamornlert D.A."/>
            <person name="Laird G."/>
            <person name="Lloyd C."/>
            <person name="Lloyd D.M."/>
            <person name="Loveland J."/>
            <person name="Lovell J."/>
            <person name="McLaren S."/>
            <person name="McLay K.E."/>
            <person name="McMurray A."/>
            <person name="Mashreghi-Mohammadi M."/>
            <person name="Matthews L."/>
            <person name="Milne S."/>
            <person name="Nickerson T."/>
            <person name="Nguyen M."/>
            <person name="Overton-Larty E."/>
            <person name="Palmer S.A."/>
            <person name="Pearce A.V."/>
            <person name="Peck A.I."/>
            <person name="Pelan S."/>
            <person name="Phillimore B."/>
            <person name="Porter K."/>
            <person name="Rice C.M."/>
            <person name="Rogosin A."/>
            <person name="Ross M.T."/>
            <person name="Sarafidou T."/>
            <person name="Sehra H.K."/>
            <person name="Shownkeen R."/>
            <person name="Skuce C.D."/>
            <person name="Smith M."/>
            <person name="Standring L."/>
            <person name="Sycamore N."/>
            <person name="Tester J."/>
            <person name="Thorpe A."/>
            <person name="Torcasso W."/>
            <person name="Tracey A."/>
            <person name="Tromans A."/>
            <person name="Tsolas J."/>
            <person name="Wall M."/>
            <person name="Walsh J."/>
            <person name="Wang H."/>
            <person name="Weinstock K."/>
            <person name="West A.P."/>
            <person name="Willey D.L."/>
            <person name="Whitehead S.L."/>
            <person name="Wilming L."/>
            <person name="Wray P.W."/>
            <person name="Young L."/>
            <person name="Chen Y."/>
            <person name="Lovering R.C."/>
            <person name="Moschonas N.K."/>
            <person name="Siebert R."/>
            <person name="Fechtel K."/>
            <person name="Bentley D."/>
            <person name="Durbin R.M."/>
            <person name="Hubbard T."/>
            <person name="Doucette-Stamm L."/>
            <person name="Beck S."/>
            <person name="Smith D.R."/>
            <person name="Rogers J."/>
        </authorList>
    </citation>
    <scope>NUCLEOTIDE SEQUENCE [LARGE SCALE GENOMIC DNA]</scope>
</reference>
<reference key="3">
    <citation type="journal article" date="2004" name="Genome Res.">
        <title>The status, quality, and expansion of the NIH full-length cDNA project: the Mammalian Gene Collection (MGC).</title>
        <authorList>
            <consortium name="The MGC Project Team"/>
        </authorList>
    </citation>
    <scope>NUCLEOTIDE SEQUENCE [LARGE SCALE MRNA] (ISOFORMS 1; 2; 3 AND 4)</scope>
    <source>
        <tissue>Brain</tissue>
    </source>
</reference>
<reference key="4">
    <citation type="journal article" date="2017" name="Mol. Cancer">
        <title>Phospholipid Phosphatase 4 promotes proliferation and tumorigenesis, and activates Ca2+-permeable Cationic Channel in lung carcinoma cells.</title>
        <authorList>
            <person name="Zhang X."/>
            <person name="Zhang L."/>
            <person name="Lin B."/>
            <person name="Chai X."/>
            <person name="Li R."/>
            <person name="Liao Y."/>
            <person name="Deng X."/>
            <person name="Liu Q."/>
            <person name="Yang W."/>
            <person name="Cai Y."/>
            <person name="Zhou W."/>
            <person name="Lin Z."/>
            <person name="Huang W."/>
            <person name="Zhong M."/>
            <person name="Lei F."/>
            <person name="Wu J."/>
            <person name="Yu S."/>
            <person name="Li X."/>
            <person name="Li S."/>
            <person name="Li Y."/>
            <person name="Zeng J."/>
            <person name="Long W."/>
            <person name="Ren D."/>
            <person name="Huang Y."/>
        </authorList>
    </citation>
    <scope>FUNCTION</scope>
</reference>
<sequence>MRELAIEIGVRALLFGVFVFTEFLDPFQRVIQPEEIWLYKNPLVQSDNIPTRLMFAISFLTPLAVICVVKIIRRTDKTEIKEAFLAVSLALALNGVCTNTIKLIVGRPRPDFFYRCFPDGVMNSEMHCTGDPDLVSEGRKSFPSIHSSFAFSGLGFTTFYLAGKLHCFTESGRGKSWRLCAAILPLYCAMMIALSRMCDYKHHWQDSFVGGVIGLIFAYICYRQHYPPLANTACHKPYVSLRVPASLKKEERPTADSAPSLPLEGITEGPV</sequence>
<name>PLPP4_HUMAN</name>
<protein>
    <recommendedName>
        <fullName evidence="10">Phospholipid phosphatase 4</fullName>
        <ecNumber evidence="4">3.1.3.4</ecNumber>
        <ecNumber evidence="4">3.6.1.75</ecNumber>
    </recommendedName>
    <alternativeName>
        <fullName evidence="10">Phosphatidic acid phosphatase type 2 domain-containing protein 1A</fullName>
    </alternativeName>
</protein>
<gene>
    <name evidence="10" type="primary">PLPP4</name>
    <name evidence="7" type="synonym">DPPL2</name>
    <name evidence="10" type="synonym">PPAPDC1</name>
    <name evidence="10" type="synonym">PPAPDC1A</name>
</gene>
<feature type="chain" id="PRO_0000286943" description="Phospholipid phosphatase 4">
    <location>
        <begin position="1"/>
        <end position="271"/>
    </location>
</feature>
<feature type="transmembrane region" description="Helical" evidence="2">
    <location>
        <begin position="4"/>
        <end position="24"/>
    </location>
</feature>
<feature type="transmembrane region" description="Helical" evidence="2">
    <location>
        <begin position="49"/>
        <end position="69"/>
    </location>
</feature>
<feature type="transmembrane region" description="Helical" evidence="2">
    <location>
        <begin position="84"/>
        <end position="104"/>
    </location>
</feature>
<feature type="transmembrane region" description="Helical" evidence="2">
    <location>
        <begin position="142"/>
        <end position="162"/>
    </location>
</feature>
<feature type="transmembrane region" description="Helical" evidence="2">
    <location>
        <begin position="179"/>
        <end position="199"/>
    </location>
</feature>
<feature type="transmembrane region" description="Helical" evidence="2">
    <location>
        <begin position="202"/>
        <end position="222"/>
    </location>
</feature>
<feature type="region of interest" description="Phosphatase sequence motif I" evidence="4">
    <location>
        <begin position="102"/>
        <end position="110"/>
    </location>
</feature>
<feature type="region of interest" description="Phosphatase sequence motif II" evidence="4">
    <location>
        <begin position="143"/>
        <end position="146"/>
    </location>
</feature>
<feature type="region of interest" description="Phosphatase sequence motif III" evidence="4">
    <location>
        <begin position="195"/>
        <end position="205"/>
    </location>
</feature>
<feature type="region of interest" description="Disordered" evidence="3">
    <location>
        <begin position="250"/>
        <end position="271"/>
    </location>
</feature>
<feature type="active site" description="Proton donors" evidence="1">
    <location>
        <position position="146"/>
    </location>
</feature>
<feature type="active site" description="Nucleophile" evidence="1">
    <location>
        <position position="202"/>
    </location>
</feature>
<feature type="site" description="Stabilizes the active site histidine for nucleophilic attack" evidence="1">
    <location>
        <position position="206"/>
    </location>
</feature>
<feature type="splice variant" id="VSP_025237" description="In isoform 3." evidence="6">
    <location>
        <begin position="1"/>
        <end position="189"/>
    </location>
</feature>
<feature type="splice variant" id="VSP_025239" description="In isoform 4." evidence="6">
    <original>AISFLTPLAVICVVKIIRRTDKTEIKEAFLAVSLALALNGV</original>
    <variation>IPLWVESSASFLHTFATDSTILLWPTQLAINPTLVCESQPH</variation>
    <location>
        <begin position="56"/>
        <end position="96"/>
    </location>
</feature>
<feature type="splice variant" id="VSP_025238" description="In isoform 2." evidence="6">
    <original>AVSLALALNGVCTNTIKLIVGRPRPDFFYRCFPDGVMNSEMHCTGDPDLVSEGRKSFPSIHSSF</original>
    <variation>V</variation>
    <location>
        <begin position="86"/>
        <end position="149"/>
    </location>
</feature>
<feature type="splice variant" id="VSP_025240" description="In isoform 4." evidence="6">
    <location>
        <begin position="97"/>
        <end position="271"/>
    </location>
</feature>
<feature type="mutagenesis site" description="Loss of phosphatase activity; when associated with A-146 and with A-202." evidence="4">
    <original>R</original>
    <variation>A</variation>
    <location>
        <position position="109"/>
    </location>
</feature>
<feature type="mutagenesis site" description="Loss of phosphatase activity; when associated with A-109 and with A-202." evidence="4">
    <original>H</original>
    <variation>A</variation>
    <location>
        <position position="146"/>
    </location>
</feature>
<feature type="mutagenesis site" description="Loss of phosphatase activity; when associated with A-109 and with A-146." evidence="4">
    <original>H</original>
    <variation>A</variation>
    <location>
        <position position="202"/>
    </location>
</feature>
<accession>Q5VZY2</accession>
<accession>A2RU82</accession>
<accession>Q08EQ2</accession>
<accession>Q0IIP2</accession>
<accession>Q495B4</accession>
<accession>Q5VZY1</accession>
<dbReference type="EC" id="3.1.3.4" evidence="4"/>
<dbReference type="EC" id="3.6.1.75" evidence="4"/>
<dbReference type="EMBL" id="BD418666">
    <property type="status" value="NOT_ANNOTATED_CDS"/>
    <property type="molecule type" value="mRNA"/>
</dbReference>
<dbReference type="EMBL" id="AC023282">
    <property type="status" value="NOT_ANNOTATED_CDS"/>
    <property type="molecule type" value="Genomic_DNA"/>
</dbReference>
<dbReference type="EMBL" id="AC073587">
    <property type="status" value="NOT_ANNOTATED_CDS"/>
    <property type="molecule type" value="Genomic_DNA"/>
</dbReference>
<dbReference type="EMBL" id="AL157782">
    <property type="status" value="NOT_ANNOTATED_CDS"/>
    <property type="molecule type" value="Genomic_DNA"/>
</dbReference>
<dbReference type="EMBL" id="BC101267">
    <property type="protein sequence ID" value="AAI01268.1"/>
    <property type="molecule type" value="mRNA"/>
</dbReference>
<dbReference type="EMBL" id="BC101268">
    <property type="protein sequence ID" value="AAI01269.1"/>
    <property type="molecule type" value="mRNA"/>
</dbReference>
<dbReference type="EMBL" id="BC101269">
    <property type="protein sequence ID" value="AAI01270.1"/>
    <property type="molecule type" value="mRNA"/>
</dbReference>
<dbReference type="EMBL" id="BC122535">
    <property type="protein sequence ID" value="AAI22536.1"/>
    <property type="molecule type" value="mRNA"/>
</dbReference>
<dbReference type="EMBL" id="BC132787">
    <property type="protein sequence ID" value="AAI32788.1"/>
    <property type="molecule type" value="mRNA"/>
</dbReference>
<dbReference type="CCDS" id="CCDS41573.1">
    <molecule id="Q5VZY2-1"/>
</dbReference>
<dbReference type="RefSeq" id="NP_001025230.1">
    <molecule id="Q5VZY2-1"/>
    <property type="nucleotide sequence ID" value="NM_001030059.3"/>
</dbReference>
<dbReference type="RefSeq" id="NP_001305095.1">
    <property type="nucleotide sequence ID" value="NM_001318166.1"/>
</dbReference>
<dbReference type="RefSeq" id="NP_001305096.1">
    <molecule id="Q5VZY2-2"/>
    <property type="nucleotide sequence ID" value="NM_001318167.2"/>
</dbReference>
<dbReference type="RefSeq" id="NP_001305097.1">
    <property type="nucleotide sequence ID" value="NM_001318168.1"/>
</dbReference>
<dbReference type="RefSeq" id="NP_001305098.1">
    <molecule id="Q5VZY2-4"/>
    <property type="nucleotide sequence ID" value="NM_001318169.2"/>
</dbReference>
<dbReference type="BioGRID" id="128189">
    <property type="interactions" value="54"/>
</dbReference>
<dbReference type="FunCoup" id="Q5VZY2">
    <property type="interactions" value="314"/>
</dbReference>
<dbReference type="IntAct" id="Q5VZY2">
    <property type="interactions" value="48"/>
</dbReference>
<dbReference type="STRING" id="9606.ENSP00000381302"/>
<dbReference type="SwissLipids" id="SLP:000000605"/>
<dbReference type="DEPOD" id="PLPP4"/>
<dbReference type="iPTMnet" id="Q5VZY2"/>
<dbReference type="PhosphoSitePlus" id="Q5VZY2"/>
<dbReference type="BioMuta" id="PLPP4"/>
<dbReference type="DMDM" id="147721098"/>
<dbReference type="MassIVE" id="Q5VZY2"/>
<dbReference type="PaxDb" id="9606-ENSP00000381302"/>
<dbReference type="PeptideAtlas" id="Q5VZY2"/>
<dbReference type="ProteomicsDB" id="65736">
    <molecule id="Q5VZY2-3"/>
</dbReference>
<dbReference type="Antibodypedia" id="46311">
    <property type="antibodies" value="75 antibodies from 19 providers"/>
</dbReference>
<dbReference type="DNASU" id="196051"/>
<dbReference type="Ensembl" id="ENST00000398250.6">
    <molecule id="Q5VZY2-1"/>
    <property type="protein sequence ID" value="ENSP00000381302.1"/>
    <property type="gene ID" value="ENSG00000203805.11"/>
</dbReference>
<dbReference type="GeneID" id="196051"/>
<dbReference type="KEGG" id="hsa:196051"/>
<dbReference type="MANE-Select" id="ENST00000398250.6">
    <property type="protein sequence ID" value="ENSP00000381302.1"/>
    <property type="RefSeq nucleotide sequence ID" value="NM_001030059.3"/>
    <property type="RefSeq protein sequence ID" value="NP_001025230.1"/>
</dbReference>
<dbReference type="UCSC" id="uc001lev.1">
    <molecule id="Q5VZY2-1"/>
    <property type="organism name" value="human"/>
</dbReference>
<dbReference type="AGR" id="HGNC:23531"/>
<dbReference type="CTD" id="196051"/>
<dbReference type="DisGeNET" id="196051"/>
<dbReference type="GeneCards" id="PLPP4"/>
<dbReference type="HGNC" id="HGNC:23531">
    <property type="gene designation" value="PLPP4"/>
</dbReference>
<dbReference type="HPA" id="ENSG00000203805">
    <property type="expression patterns" value="Tissue enriched (brain)"/>
</dbReference>
<dbReference type="neXtProt" id="NX_Q5VZY2"/>
<dbReference type="OpenTargets" id="ENSG00000203805"/>
<dbReference type="PharmGKB" id="PA134907381"/>
<dbReference type="VEuPathDB" id="HostDB:ENSG00000203805"/>
<dbReference type="eggNOG" id="KOG3030">
    <property type="taxonomic scope" value="Eukaryota"/>
</dbReference>
<dbReference type="GeneTree" id="ENSGT00940000158288"/>
<dbReference type="InParanoid" id="Q5VZY2"/>
<dbReference type="OMA" id="WFSYRRY"/>
<dbReference type="OrthoDB" id="10030083at2759"/>
<dbReference type="PAN-GO" id="Q5VZY2">
    <property type="GO annotations" value="2 GO annotations based on evolutionary models"/>
</dbReference>
<dbReference type="PhylomeDB" id="Q5VZY2"/>
<dbReference type="TreeFam" id="TF323722"/>
<dbReference type="BioCyc" id="MetaCyc:G66-31698-MONOMER"/>
<dbReference type="BRENDA" id="3.1.3.4">
    <property type="organism ID" value="2681"/>
</dbReference>
<dbReference type="BRENDA" id="3.1.3.81">
    <property type="organism ID" value="2681"/>
</dbReference>
<dbReference type="PathwayCommons" id="Q5VZY2"/>
<dbReference type="Reactome" id="R-HSA-2029485">
    <property type="pathway name" value="Role of phospholipids in phagocytosis"/>
</dbReference>
<dbReference type="SABIO-RK" id="Q5VZY2"/>
<dbReference type="SignaLink" id="Q5VZY2"/>
<dbReference type="UniPathway" id="UPA00085"/>
<dbReference type="BioGRID-ORCS" id="196051">
    <property type="hits" value="16 hits in 1113 CRISPR screens"/>
</dbReference>
<dbReference type="ChiTaRS" id="PLPP4">
    <property type="organism name" value="human"/>
</dbReference>
<dbReference type="GeneWiki" id="PPAPDC1A"/>
<dbReference type="GenomeRNAi" id="196051"/>
<dbReference type="Pharos" id="Q5VZY2">
    <property type="development level" value="Tbio"/>
</dbReference>
<dbReference type="PRO" id="PR:Q5VZY2"/>
<dbReference type="Proteomes" id="UP000005640">
    <property type="component" value="Chromosome 10"/>
</dbReference>
<dbReference type="RNAct" id="Q5VZY2">
    <property type="molecule type" value="protein"/>
</dbReference>
<dbReference type="Bgee" id="ENSG00000203805">
    <property type="expression patterns" value="Expressed in oocyte and 127 other cell types or tissues"/>
</dbReference>
<dbReference type="GO" id="GO:0016020">
    <property type="term" value="C:membrane"/>
    <property type="evidence" value="ECO:0000318"/>
    <property type="project" value="GO_Central"/>
</dbReference>
<dbReference type="GO" id="GO:0005886">
    <property type="term" value="C:plasma membrane"/>
    <property type="evidence" value="ECO:0000304"/>
    <property type="project" value="Reactome"/>
</dbReference>
<dbReference type="GO" id="GO:0000810">
    <property type="term" value="F:diacylglycerol diphosphate phosphatase activity"/>
    <property type="evidence" value="ECO:0000314"/>
    <property type="project" value="UniProtKB"/>
</dbReference>
<dbReference type="GO" id="GO:0042802">
    <property type="term" value="F:identical protein binding"/>
    <property type="evidence" value="ECO:0000353"/>
    <property type="project" value="IntAct"/>
</dbReference>
<dbReference type="GO" id="GO:0008195">
    <property type="term" value="F:phosphatidate phosphatase activity"/>
    <property type="evidence" value="ECO:0000314"/>
    <property type="project" value="UniProtKB"/>
</dbReference>
<dbReference type="GO" id="GO:0001835">
    <property type="term" value="P:blastocyst hatching"/>
    <property type="evidence" value="ECO:0007669"/>
    <property type="project" value="Ensembl"/>
</dbReference>
<dbReference type="GO" id="GO:0038096">
    <property type="term" value="P:Fc-gamma receptor signaling pathway involved in phagocytosis"/>
    <property type="evidence" value="ECO:0000304"/>
    <property type="project" value="Reactome"/>
</dbReference>
<dbReference type="GO" id="GO:0046839">
    <property type="term" value="P:phospholipid dephosphorylation"/>
    <property type="evidence" value="ECO:0000314"/>
    <property type="project" value="UniProtKB"/>
</dbReference>
<dbReference type="GO" id="GO:0006644">
    <property type="term" value="P:phospholipid metabolic process"/>
    <property type="evidence" value="ECO:0000318"/>
    <property type="project" value="GO_Central"/>
</dbReference>
<dbReference type="GO" id="GO:0090279">
    <property type="term" value="P:regulation of calcium ion import"/>
    <property type="evidence" value="ECO:0000315"/>
    <property type="project" value="UniProtKB"/>
</dbReference>
<dbReference type="CDD" id="cd03390">
    <property type="entry name" value="PAP2_containing_1_like"/>
    <property type="match status" value="1"/>
</dbReference>
<dbReference type="FunFam" id="1.20.144.10:FF:000009">
    <property type="entry name" value="Phosphatidate phosphatase PPAPDC1A"/>
    <property type="match status" value="1"/>
</dbReference>
<dbReference type="Gene3D" id="1.20.144.10">
    <property type="entry name" value="Phosphatidic acid phosphatase type 2/haloperoxidase"/>
    <property type="match status" value="1"/>
</dbReference>
<dbReference type="InterPro" id="IPR036938">
    <property type="entry name" value="P_Acid_Pase_2/haloperoxi_sf"/>
</dbReference>
<dbReference type="InterPro" id="IPR000326">
    <property type="entry name" value="P_Acid_Pase_2/haloperoxidase"/>
</dbReference>
<dbReference type="InterPro" id="IPR043216">
    <property type="entry name" value="PA_PP_rel"/>
</dbReference>
<dbReference type="PANTHER" id="PTHR10165">
    <property type="entry name" value="LIPID PHOSPHATE PHOSPHATASE"/>
    <property type="match status" value="1"/>
</dbReference>
<dbReference type="PANTHER" id="PTHR10165:SF90">
    <property type="entry name" value="PHOSPHOLIPID PHOSPHATASE 4"/>
    <property type="match status" value="1"/>
</dbReference>
<dbReference type="Pfam" id="PF01569">
    <property type="entry name" value="PAP2"/>
    <property type="match status" value="1"/>
</dbReference>
<dbReference type="SMART" id="SM00014">
    <property type="entry name" value="acidPPc"/>
    <property type="match status" value="1"/>
</dbReference>
<dbReference type="SUPFAM" id="SSF48317">
    <property type="entry name" value="Acid phosphatase/Vanadium-dependent haloperoxidase"/>
    <property type="match status" value="1"/>
</dbReference>